<comment type="function">
    <text evidence="4 10 11">Histone demethylase that specifically demethylates 'Lys-4' of histone H3, thereby playing a central role in histone code. Does not demethylate histone H3 'Lys-9', H3 'Lys-27', H3 'Lys-36', H3 'Lys-79' or H4 'Lys-20'. Demethylates trimethylated and dimethylated but not monomethylated H3 'Lys-4'. May play a role in spermatogenesis. Involved in transcriptional repression of diverse metastasis-associated genes; in this function seems to cooperate with ZMYND8. Suppresses prostate cancer cell invasion. Regulates androgen receptor (AR) transcriptional activity by demethylating H3K4me3 active transcription marks (By similarity).</text>
</comment>
<comment type="catalytic activity">
    <reaction evidence="4">
        <text>N(6),N(6),N(6)-trimethyl-L-lysyl(4)-[histone H3] + 3 2-oxoglutarate + 3 O2 = L-lysyl(4)-[histone H3] + 3 formaldehyde + 3 succinate + 3 CO2</text>
        <dbReference type="Rhea" id="RHEA:60208"/>
        <dbReference type="Rhea" id="RHEA-COMP:15537"/>
        <dbReference type="Rhea" id="RHEA-COMP:15547"/>
        <dbReference type="ChEBI" id="CHEBI:15379"/>
        <dbReference type="ChEBI" id="CHEBI:16526"/>
        <dbReference type="ChEBI" id="CHEBI:16810"/>
        <dbReference type="ChEBI" id="CHEBI:16842"/>
        <dbReference type="ChEBI" id="CHEBI:29969"/>
        <dbReference type="ChEBI" id="CHEBI:30031"/>
        <dbReference type="ChEBI" id="CHEBI:61961"/>
        <dbReference type="EC" id="1.14.11.67"/>
    </reaction>
</comment>
<comment type="cofactor">
    <cofactor evidence="4">
        <name>L-ascorbate</name>
        <dbReference type="ChEBI" id="CHEBI:38290"/>
    </cofactor>
</comment>
<comment type="cofactor">
    <cofactor evidence="4">
        <name>Fe(2+)</name>
        <dbReference type="ChEBI" id="CHEBI:29033"/>
    </cofactor>
    <text evidence="4">Binds 1 Fe(2+) ion per subunit.</text>
</comment>
<comment type="subunit">
    <text evidence="4">Interacts withPCGF6, MSH5, ZMYND8, AR.</text>
</comment>
<comment type="subcellular location">
    <subcellularLocation>
        <location evidence="4 6 7">Nucleus</location>
    </subcellularLocation>
</comment>
<comment type="alternative products">
    <event type="alternative splicing"/>
    <isoform>
        <id>Q62240-1</id>
        <name>1</name>
        <sequence type="displayed"/>
    </isoform>
    <isoform>
        <id>Q62240-2</id>
        <name>2</name>
        <sequence type="described" ref="VSP_026412"/>
    </isoform>
    <isoform>
        <id>Q62240-3</id>
        <name>3</name>
        <sequence type="described" ref="VSP_026413 VSP_026414"/>
    </isoform>
    <isoform>
        <id>Q62240-4</id>
        <name>4</name>
        <sequence type="described" ref="VSP_026415 VSP_026416"/>
    </isoform>
</comment>
<comment type="domain">
    <text evidence="4">The JmjC domain is required for enzymatic activity.</text>
</comment>
<comment type="miscellaneous">
    <text>KDM5D encodes an H-Y epitope that is defined by the octamer peptide TENSGKDI; since no similar peptide was found in KDM5C, it is presumably the genetic basis for the antigenic difference between males and females that contributes toward a tissue transplant rejection response.</text>
</comment>
<comment type="miscellaneous">
    <molecule>Isoform 3</molecule>
    <text evidence="15">May be due to an intron retention.</text>
</comment>
<comment type="miscellaneous">
    <molecule>Isoform 4</molecule>
    <text evidence="15">May be produced at very low levels due to a premature stop codon in the mRNA, leading to nonsense-mediated mRNA decay.</text>
</comment>
<comment type="similarity">
    <text evidence="15">Belongs to the JARID1 histone demethylase family.</text>
</comment>
<dbReference type="EC" id="1.14.11.67" evidence="4"/>
<dbReference type="EMBL" id="AF127244">
    <property type="protein sequence ID" value="AAD53048.1"/>
    <property type="molecule type" value="mRNA"/>
</dbReference>
<dbReference type="EMBL" id="AK140971">
    <property type="protein sequence ID" value="BAE24534.1"/>
    <property type="molecule type" value="mRNA"/>
</dbReference>
<dbReference type="EMBL" id="BC059077">
    <property type="protein sequence ID" value="AAH59077.1"/>
    <property type="molecule type" value="mRNA"/>
</dbReference>
<dbReference type="EMBL" id="Z29652">
    <property type="protein sequence ID" value="CAA82760.1"/>
    <property type="molecule type" value="mRNA"/>
</dbReference>
<dbReference type="CCDS" id="CCDS30541.1">
    <molecule id="Q62240-1"/>
</dbReference>
<dbReference type="PIR" id="I48776">
    <property type="entry name" value="I48776"/>
</dbReference>
<dbReference type="RefSeq" id="NP_035549.1">
    <molecule id="Q62240-1"/>
    <property type="nucleotide sequence ID" value="NM_011419.4"/>
</dbReference>
<dbReference type="SMR" id="Q62240"/>
<dbReference type="BioGRID" id="203342">
    <property type="interactions" value="5"/>
</dbReference>
<dbReference type="FunCoup" id="Q62240">
    <property type="interactions" value="1063"/>
</dbReference>
<dbReference type="IntAct" id="Q62240">
    <property type="interactions" value="3"/>
</dbReference>
<dbReference type="STRING" id="10090.ENSMUSP00000061095"/>
<dbReference type="iPTMnet" id="Q62240"/>
<dbReference type="PhosphoSitePlus" id="Q62240"/>
<dbReference type="jPOST" id="Q62240"/>
<dbReference type="PaxDb" id="10090-ENSMUSP00000061095"/>
<dbReference type="PeptideAtlas" id="Q62240"/>
<dbReference type="ProteomicsDB" id="269293">
    <molecule id="Q62240-1"/>
</dbReference>
<dbReference type="ProteomicsDB" id="269294">
    <molecule id="Q62240-2"/>
</dbReference>
<dbReference type="ProteomicsDB" id="269295">
    <molecule id="Q62240-3"/>
</dbReference>
<dbReference type="ProteomicsDB" id="269296">
    <molecule id="Q62240-4"/>
</dbReference>
<dbReference type="Antibodypedia" id="21879">
    <property type="antibodies" value="55 antibodies from 25 providers"/>
</dbReference>
<dbReference type="DNASU" id="20592"/>
<dbReference type="Ensembl" id="ENSMUST00000055032.14">
    <molecule id="Q62240-1"/>
    <property type="protein sequence ID" value="ENSMUSP00000061095.8"/>
    <property type="gene ID" value="ENSMUSG00000056673.15"/>
</dbReference>
<dbReference type="Ensembl" id="ENSMUST00000186696.7">
    <molecule id="Q62240-4"/>
    <property type="protein sequence ID" value="ENSMUSP00000140663.2"/>
    <property type="gene ID" value="ENSMUSG00000056673.15"/>
</dbReference>
<dbReference type="GeneID" id="20592"/>
<dbReference type="KEGG" id="mmu:20592"/>
<dbReference type="UCSC" id="uc009uyz.1">
    <molecule id="Q62240-3"/>
    <property type="organism name" value="mouse"/>
</dbReference>
<dbReference type="UCSC" id="uc009uzb.1">
    <molecule id="Q62240-1"/>
    <property type="organism name" value="mouse"/>
</dbReference>
<dbReference type="AGR" id="MGI:99780"/>
<dbReference type="CTD" id="8284"/>
<dbReference type="MGI" id="MGI:99780">
    <property type="gene designation" value="Kdm5d"/>
</dbReference>
<dbReference type="VEuPathDB" id="HostDB:ENSMUSG00000056673"/>
<dbReference type="eggNOG" id="KOG1246">
    <property type="taxonomic scope" value="Eukaryota"/>
</dbReference>
<dbReference type="GeneTree" id="ENSGT00940000161236"/>
<dbReference type="HOGENOM" id="CLU_000991_2_2_1"/>
<dbReference type="InParanoid" id="Q62240"/>
<dbReference type="OMA" id="YRTNQHA"/>
<dbReference type="OrthoDB" id="43735at9989"/>
<dbReference type="PhylomeDB" id="Q62240"/>
<dbReference type="TreeFam" id="TF106476"/>
<dbReference type="Reactome" id="R-MMU-3214842">
    <property type="pathway name" value="HDMs demethylate histones"/>
</dbReference>
<dbReference type="BioGRID-ORCS" id="20592">
    <property type="hits" value="2 hits in 80 CRISPR screens"/>
</dbReference>
<dbReference type="ChiTaRS" id="Kdm5d">
    <property type="organism name" value="mouse"/>
</dbReference>
<dbReference type="PRO" id="PR:Q62240"/>
<dbReference type="Proteomes" id="UP000000589">
    <property type="component" value="Chromosome Y"/>
</dbReference>
<dbReference type="RNAct" id="Q62240">
    <property type="molecule type" value="protein"/>
</dbReference>
<dbReference type="Bgee" id="ENSMUSG00000056673">
    <property type="expression patterns" value="Expressed in embryonic post-anal tail and 205 other cell types or tissues"/>
</dbReference>
<dbReference type="ExpressionAtlas" id="Q62240">
    <property type="expression patterns" value="baseline and differential"/>
</dbReference>
<dbReference type="GO" id="GO:0001650">
    <property type="term" value="C:fibrillar center"/>
    <property type="evidence" value="ECO:0007669"/>
    <property type="project" value="Ensembl"/>
</dbReference>
<dbReference type="GO" id="GO:0003677">
    <property type="term" value="F:DNA binding"/>
    <property type="evidence" value="ECO:0007669"/>
    <property type="project" value="InterPro"/>
</dbReference>
<dbReference type="GO" id="GO:0032453">
    <property type="term" value="F:histone H3K4 demethylase activity"/>
    <property type="evidence" value="ECO:0000266"/>
    <property type="project" value="MGI"/>
</dbReference>
<dbReference type="GO" id="GO:0034647">
    <property type="term" value="F:histone H3K4me/H3K4me2/H3K4me3 demethylase activity"/>
    <property type="evidence" value="ECO:0007669"/>
    <property type="project" value="UniProtKB-EC"/>
</dbReference>
<dbReference type="GO" id="GO:0050681">
    <property type="term" value="F:nuclear androgen receptor binding"/>
    <property type="evidence" value="ECO:0007669"/>
    <property type="project" value="Ensembl"/>
</dbReference>
<dbReference type="GO" id="GO:0008270">
    <property type="term" value="F:zinc ion binding"/>
    <property type="evidence" value="ECO:0007669"/>
    <property type="project" value="UniProtKB-KW"/>
</dbReference>
<dbReference type="GO" id="GO:0060765">
    <property type="term" value="P:regulation of androgen receptor signaling pathway"/>
    <property type="evidence" value="ECO:0007669"/>
    <property type="project" value="Ensembl"/>
</dbReference>
<dbReference type="GO" id="GO:0002457">
    <property type="term" value="P:T cell antigen processing and presentation"/>
    <property type="evidence" value="ECO:0000314"/>
    <property type="project" value="MGI"/>
</dbReference>
<dbReference type="CDD" id="cd16875">
    <property type="entry name" value="ARID_KDM5C_5D"/>
    <property type="match status" value="1"/>
</dbReference>
<dbReference type="CDD" id="cd15604">
    <property type="entry name" value="PHD1_KDM5C_5D"/>
    <property type="match status" value="1"/>
</dbReference>
<dbReference type="FunFam" id="3.30.40.10:FF:000072">
    <property type="entry name" value="lysine-specific demethylase 5C isoform X2"/>
    <property type="match status" value="1"/>
</dbReference>
<dbReference type="FunFam" id="1.10.150.60:FF:000001">
    <property type="entry name" value="Putative lysine-specific demethylase 5b"/>
    <property type="match status" value="1"/>
</dbReference>
<dbReference type="FunFam" id="2.60.120.650:FF:000001">
    <property type="entry name" value="Putative lysine-specific demethylase 5b"/>
    <property type="match status" value="1"/>
</dbReference>
<dbReference type="Gene3D" id="1.10.150.60">
    <property type="entry name" value="ARID DNA-binding domain"/>
    <property type="match status" value="1"/>
</dbReference>
<dbReference type="Gene3D" id="2.60.120.650">
    <property type="entry name" value="Cupin"/>
    <property type="match status" value="1"/>
</dbReference>
<dbReference type="Gene3D" id="3.30.40.10">
    <property type="entry name" value="Zinc/RING finger domain, C3HC4 (zinc finger)"/>
    <property type="match status" value="1"/>
</dbReference>
<dbReference type="InterPro" id="IPR001606">
    <property type="entry name" value="ARID_dom"/>
</dbReference>
<dbReference type="InterPro" id="IPR036431">
    <property type="entry name" value="ARID_dom_sf"/>
</dbReference>
<dbReference type="InterPro" id="IPR003347">
    <property type="entry name" value="JmjC_dom"/>
</dbReference>
<dbReference type="InterPro" id="IPR003349">
    <property type="entry name" value="JmjN"/>
</dbReference>
<dbReference type="InterPro" id="IPR048615">
    <property type="entry name" value="KDM5_C-hel"/>
</dbReference>
<dbReference type="InterPro" id="IPR013637">
    <property type="entry name" value="Lys_sp_deMease-like_dom"/>
</dbReference>
<dbReference type="InterPro" id="IPR019786">
    <property type="entry name" value="Zinc_finger_PHD-type_CS"/>
</dbReference>
<dbReference type="InterPro" id="IPR004198">
    <property type="entry name" value="Znf_C5HC2"/>
</dbReference>
<dbReference type="InterPro" id="IPR011011">
    <property type="entry name" value="Znf_FYVE_PHD"/>
</dbReference>
<dbReference type="InterPro" id="IPR001965">
    <property type="entry name" value="Znf_PHD"/>
</dbReference>
<dbReference type="InterPro" id="IPR019787">
    <property type="entry name" value="Znf_PHD-finger"/>
</dbReference>
<dbReference type="InterPro" id="IPR013083">
    <property type="entry name" value="Znf_RING/FYVE/PHD"/>
</dbReference>
<dbReference type="PANTHER" id="PTHR10694">
    <property type="entry name" value="LYSINE-SPECIFIC DEMETHYLASE"/>
    <property type="match status" value="1"/>
</dbReference>
<dbReference type="PANTHER" id="PTHR10694:SF137">
    <property type="entry name" value="LYSINE-SPECIFIC DEMETHYLASE 5D"/>
    <property type="match status" value="1"/>
</dbReference>
<dbReference type="Pfam" id="PF01388">
    <property type="entry name" value="ARID"/>
    <property type="match status" value="1"/>
</dbReference>
<dbReference type="Pfam" id="PF02373">
    <property type="entry name" value="JmjC"/>
    <property type="match status" value="1"/>
</dbReference>
<dbReference type="Pfam" id="PF02375">
    <property type="entry name" value="JmjN"/>
    <property type="match status" value="1"/>
</dbReference>
<dbReference type="Pfam" id="PF21323">
    <property type="entry name" value="KDM5_C-hel"/>
    <property type="match status" value="1"/>
</dbReference>
<dbReference type="Pfam" id="PF00628">
    <property type="entry name" value="PHD"/>
    <property type="match status" value="1"/>
</dbReference>
<dbReference type="Pfam" id="PF08429">
    <property type="entry name" value="PLU-1"/>
    <property type="match status" value="1"/>
</dbReference>
<dbReference type="Pfam" id="PF02928">
    <property type="entry name" value="zf-C5HC2"/>
    <property type="match status" value="1"/>
</dbReference>
<dbReference type="SMART" id="SM01014">
    <property type="entry name" value="ARID"/>
    <property type="match status" value="1"/>
</dbReference>
<dbReference type="SMART" id="SM00501">
    <property type="entry name" value="BRIGHT"/>
    <property type="match status" value="1"/>
</dbReference>
<dbReference type="SMART" id="SM00558">
    <property type="entry name" value="JmjC"/>
    <property type="match status" value="1"/>
</dbReference>
<dbReference type="SMART" id="SM00545">
    <property type="entry name" value="JmjN"/>
    <property type="match status" value="1"/>
</dbReference>
<dbReference type="SMART" id="SM00249">
    <property type="entry name" value="PHD"/>
    <property type="match status" value="2"/>
</dbReference>
<dbReference type="SUPFAM" id="SSF46774">
    <property type="entry name" value="ARID-like"/>
    <property type="match status" value="1"/>
</dbReference>
<dbReference type="SUPFAM" id="SSF51197">
    <property type="entry name" value="Clavaminate synthase-like"/>
    <property type="match status" value="1"/>
</dbReference>
<dbReference type="SUPFAM" id="SSF57903">
    <property type="entry name" value="FYVE/PHD zinc finger"/>
    <property type="match status" value="2"/>
</dbReference>
<dbReference type="PROSITE" id="PS51011">
    <property type="entry name" value="ARID"/>
    <property type="match status" value="1"/>
</dbReference>
<dbReference type="PROSITE" id="PS51184">
    <property type="entry name" value="JMJC"/>
    <property type="match status" value="1"/>
</dbReference>
<dbReference type="PROSITE" id="PS51183">
    <property type="entry name" value="JMJN"/>
    <property type="match status" value="1"/>
</dbReference>
<dbReference type="PROSITE" id="PS01359">
    <property type="entry name" value="ZF_PHD_1"/>
    <property type="match status" value="2"/>
</dbReference>
<dbReference type="PROSITE" id="PS50016">
    <property type="entry name" value="ZF_PHD_2"/>
    <property type="match status" value="1"/>
</dbReference>
<evidence type="ECO:0000250" key="1">
    <source>
        <dbReference type="UniProtKB" id="P29375"/>
    </source>
</evidence>
<evidence type="ECO:0000250" key="2">
    <source>
        <dbReference type="UniProtKB" id="P41229"/>
    </source>
</evidence>
<evidence type="ECO:0000250" key="3">
    <source>
        <dbReference type="UniProtKB" id="P41230"/>
    </source>
</evidence>
<evidence type="ECO:0000250" key="4">
    <source>
        <dbReference type="UniProtKB" id="Q9BY66"/>
    </source>
</evidence>
<evidence type="ECO:0000255" key="5">
    <source>
        <dbReference type="PROSITE-ProRule" id="PRU00146"/>
    </source>
</evidence>
<evidence type="ECO:0000255" key="6">
    <source>
        <dbReference type="PROSITE-ProRule" id="PRU00355"/>
    </source>
</evidence>
<evidence type="ECO:0000255" key="7">
    <source>
        <dbReference type="PROSITE-ProRule" id="PRU00537"/>
    </source>
</evidence>
<evidence type="ECO:0000255" key="8">
    <source>
        <dbReference type="PROSITE-ProRule" id="PRU00538"/>
    </source>
</evidence>
<evidence type="ECO:0000256" key="9">
    <source>
        <dbReference type="SAM" id="MobiDB-lite"/>
    </source>
</evidence>
<evidence type="ECO:0000269" key="10">
    <source>
    </source>
</evidence>
<evidence type="ECO:0000269" key="11">
    <source>
    </source>
</evidence>
<evidence type="ECO:0000303" key="12">
    <source>
    </source>
</evidence>
<evidence type="ECO:0000303" key="13">
    <source>
    </source>
</evidence>
<evidence type="ECO:0000303" key="14">
    <source>
    </source>
</evidence>
<evidence type="ECO:0000305" key="15"/>
<accession>Q62240</accession>
<accession>Q3US03</accession>
<accession>Q6PCX3</accession>
<accession>Q9QVR9</accession>
<accession>Q9R040</accession>
<sequence length="1548" mass="177018">MKPGSDDFLPPPECPVFEPSWAEFRDPLGYIAKIRPIAEKSGICKIRPPADWQPPFAVEVDNFRFTPRIQRLNELEAQTRVKLNYLDQIAKFWEIQGSSLKIPNVERKILDLYSLNKIVMEEGGYEAICKDRRWARVAQRLNYPSGKNIGSLLRSHYERIIYPYEIFQSGANLVQCNTDPFDSEERDKEYKPHSIPLRQSVQPSKFSCYSRRGKRLQPEPEPTEEDIEKNPELKKLQIYGAGPKMIGLGLKAKEKTLRKKDSKQPDKEEVTCPATIVVKGEASEFGKVTSAFSDKNLNHSFEPCMKMTMQLRNNHSSTQFMNSYVCRICSRGDEVDKFLLCDGCSDNYHIFCLLPPLSEVPKGVWRCPKCILAECKSPPEAFGFEQATQEYTLQSFGEMADSFKADYFNMPVHMVPTEVVEKEFWRLVSSIEEDVTVEYGADIHSKEFGSGFPVNNSKWDLSPEEKEYAACGWNLNVMPVLDQSVLCHINADISGMKVPWLYVGMVFSAFCWHIEDHWSYSINYLHWGEPKTWYGVPSLAAEHLEDVMKRLTPELFDSQPDLLHQLVTLMNPNTLMSHGVPVVRTNQCAGEFVITFPRAYHSGFNQGYNFAEAVNFCTADWLPVGRQCIEHYRRLRRYCVFSHEELICKMAAFPEKLDLNLAVAVHKEMFIMVQEERRLRKTLLEKGITEAEREAFELLPDDERQCIKCKTTCFLSALACYDCPDSLVCLSHINDLCKCSRNRQYLRYRYTLDELPAMLQKLKIRAESFDNWANKVQAALEVEDGRKRSFEELRALESEARDRRFPNSELLQRLKKCLTEAEACISQVLGLISNSEDRLQTPQITLTELQLLLKQMGTLPCTMHQIDEVKDVLQQVESYQIETREALTSLPYSLEILQSLMEKGQQLRVEVPEAHQLEELLEQAQWLDQVKQALAPSGQRHSLVIMKKLLVMGTKVASSPSVNKARAELQELLTIAECWEEKAHFCLKASQKHSPATLEVIIREAENIPVYLPNIQSLKEALTKAQAWIADVNEIQNGDHYPCLDDLEGLVAVGRDLPVELEELRQLENQVLTAHSWKEKASKTFLKKNSCYTLLEVLCPCADAGSVSTKRSRWIEKEMGLYKYDTELLGLSAQDLRDPGSVIMAFKEGEEKEKEGILHLRHINSAKPSPMSSSMNASATSICICGQVCAGVESLQCDLCHDWFHGQCVTVPHLLSSVRASHTSSQLLAWWEWDTKFLCPLCMRSRRPRLETILSLLVGLQRLSVRLPEGEALQCLTERAIGWQGRARQALASEDVTALLKQLEKSRQQLQDELRHKKPPTLPSGFAFDCLTENSGKDILKEEEELVLNEERIKSSEKIVPKESSCKGDKELLPSLLSQLTGPVLELPEATRAPLEELMMEGDLLEVTLDENYSIWQLLQAGQNPNLERIHTLLELEKPENPGNWSEEQTPERRRQRRQKVVLSRKGEDFTQKELESKRVKSSRIKPKEEKFQKPILGDNVLYTHHTEHTNILKEHINSVQGKDPSPSSSFPSLTPLLHLSYFHQQKL</sequence>
<gene>
    <name type="primary">Kdm5d</name>
    <name type="synonym">Hya</name>
    <name type="synonym">Jarid1d</name>
    <name type="synonym">Smcy</name>
</gene>
<keyword id="KW-0025">Alternative splicing</keyword>
<keyword id="KW-0156">Chromatin regulator</keyword>
<keyword id="KW-0223">Dioxygenase</keyword>
<keyword id="KW-0408">Iron</keyword>
<keyword id="KW-1017">Isopeptide bond</keyword>
<keyword id="KW-0479">Metal-binding</keyword>
<keyword id="KW-0539">Nucleus</keyword>
<keyword id="KW-0560">Oxidoreductase</keyword>
<keyword id="KW-0597">Phosphoprotein</keyword>
<keyword id="KW-1185">Reference proteome</keyword>
<keyword id="KW-0677">Repeat</keyword>
<keyword id="KW-0804">Transcription</keyword>
<keyword id="KW-0805">Transcription regulation</keyword>
<keyword id="KW-0832">Ubl conjugation</keyword>
<keyword id="KW-0862">Zinc</keyword>
<keyword id="KW-0863">Zinc-finger</keyword>
<reference key="1">
    <citation type="journal article" date="1999" name="Mamm. Genome">
        <title>Mouse H-Y encoding Smcy gene and its X chromosomal homolog Smcx.</title>
        <authorList>
            <person name="Agulnik A.I."/>
            <person name="Longepied G."/>
            <person name="Ty M.T."/>
            <person name="Bishop C.E."/>
            <person name="Mitchell M.J."/>
        </authorList>
    </citation>
    <scope>NUCLEOTIDE SEQUENCE [MRNA] (ISOFORM 1)</scope>
    <source>
        <strain>129/SvJ</strain>
    </source>
</reference>
<reference key="2">
    <citation type="journal article" date="2005" name="Science">
        <title>The transcriptional landscape of the mammalian genome.</title>
        <authorList>
            <person name="Carninci P."/>
            <person name="Kasukawa T."/>
            <person name="Katayama S."/>
            <person name="Gough J."/>
            <person name="Frith M.C."/>
            <person name="Maeda N."/>
            <person name="Oyama R."/>
            <person name="Ravasi T."/>
            <person name="Lenhard B."/>
            <person name="Wells C."/>
            <person name="Kodzius R."/>
            <person name="Shimokawa K."/>
            <person name="Bajic V.B."/>
            <person name="Brenner S.E."/>
            <person name="Batalov S."/>
            <person name="Forrest A.R."/>
            <person name="Zavolan M."/>
            <person name="Davis M.J."/>
            <person name="Wilming L.G."/>
            <person name="Aidinis V."/>
            <person name="Allen J.E."/>
            <person name="Ambesi-Impiombato A."/>
            <person name="Apweiler R."/>
            <person name="Aturaliya R.N."/>
            <person name="Bailey T.L."/>
            <person name="Bansal M."/>
            <person name="Baxter L."/>
            <person name="Beisel K.W."/>
            <person name="Bersano T."/>
            <person name="Bono H."/>
            <person name="Chalk A.M."/>
            <person name="Chiu K.P."/>
            <person name="Choudhary V."/>
            <person name="Christoffels A."/>
            <person name="Clutterbuck D.R."/>
            <person name="Crowe M.L."/>
            <person name="Dalla E."/>
            <person name="Dalrymple B.P."/>
            <person name="de Bono B."/>
            <person name="Della Gatta G."/>
            <person name="di Bernardo D."/>
            <person name="Down T."/>
            <person name="Engstrom P."/>
            <person name="Fagiolini M."/>
            <person name="Faulkner G."/>
            <person name="Fletcher C.F."/>
            <person name="Fukushima T."/>
            <person name="Furuno M."/>
            <person name="Futaki S."/>
            <person name="Gariboldi M."/>
            <person name="Georgii-Hemming P."/>
            <person name="Gingeras T.R."/>
            <person name="Gojobori T."/>
            <person name="Green R.E."/>
            <person name="Gustincich S."/>
            <person name="Harbers M."/>
            <person name="Hayashi Y."/>
            <person name="Hensch T.K."/>
            <person name="Hirokawa N."/>
            <person name="Hill D."/>
            <person name="Huminiecki L."/>
            <person name="Iacono M."/>
            <person name="Ikeo K."/>
            <person name="Iwama A."/>
            <person name="Ishikawa T."/>
            <person name="Jakt M."/>
            <person name="Kanapin A."/>
            <person name="Katoh M."/>
            <person name="Kawasawa Y."/>
            <person name="Kelso J."/>
            <person name="Kitamura H."/>
            <person name="Kitano H."/>
            <person name="Kollias G."/>
            <person name="Krishnan S.P."/>
            <person name="Kruger A."/>
            <person name="Kummerfeld S.K."/>
            <person name="Kurochkin I.V."/>
            <person name="Lareau L.F."/>
            <person name="Lazarevic D."/>
            <person name="Lipovich L."/>
            <person name="Liu J."/>
            <person name="Liuni S."/>
            <person name="McWilliam S."/>
            <person name="Madan Babu M."/>
            <person name="Madera M."/>
            <person name="Marchionni L."/>
            <person name="Matsuda H."/>
            <person name="Matsuzawa S."/>
            <person name="Miki H."/>
            <person name="Mignone F."/>
            <person name="Miyake S."/>
            <person name="Morris K."/>
            <person name="Mottagui-Tabar S."/>
            <person name="Mulder N."/>
            <person name="Nakano N."/>
            <person name="Nakauchi H."/>
            <person name="Ng P."/>
            <person name="Nilsson R."/>
            <person name="Nishiguchi S."/>
            <person name="Nishikawa S."/>
            <person name="Nori F."/>
            <person name="Ohara O."/>
            <person name="Okazaki Y."/>
            <person name="Orlando V."/>
            <person name="Pang K.C."/>
            <person name="Pavan W.J."/>
            <person name="Pavesi G."/>
            <person name="Pesole G."/>
            <person name="Petrovsky N."/>
            <person name="Piazza S."/>
            <person name="Reed J."/>
            <person name="Reid J.F."/>
            <person name="Ring B.Z."/>
            <person name="Ringwald M."/>
            <person name="Rost B."/>
            <person name="Ruan Y."/>
            <person name="Salzberg S.L."/>
            <person name="Sandelin A."/>
            <person name="Schneider C."/>
            <person name="Schoenbach C."/>
            <person name="Sekiguchi K."/>
            <person name="Semple C.A."/>
            <person name="Seno S."/>
            <person name="Sessa L."/>
            <person name="Sheng Y."/>
            <person name="Shibata Y."/>
            <person name="Shimada H."/>
            <person name="Shimada K."/>
            <person name="Silva D."/>
            <person name="Sinclair B."/>
            <person name="Sperling S."/>
            <person name="Stupka E."/>
            <person name="Sugiura K."/>
            <person name="Sultana R."/>
            <person name="Takenaka Y."/>
            <person name="Taki K."/>
            <person name="Tammoja K."/>
            <person name="Tan S.L."/>
            <person name="Tang S."/>
            <person name="Taylor M.S."/>
            <person name="Tegner J."/>
            <person name="Teichmann S.A."/>
            <person name="Ueda H.R."/>
            <person name="van Nimwegen E."/>
            <person name="Verardo R."/>
            <person name="Wei C.L."/>
            <person name="Yagi K."/>
            <person name="Yamanishi H."/>
            <person name="Zabarovsky E."/>
            <person name="Zhu S."/>
            <person name="Zimmer A."/>
            <person name="Hide W."/>
            <person name="Bult C."/>
            <person name="Grimmond S.M."/>
            <person name="Teasdale R.D."/>
            <person name="Liu E.T."/>
            <person name="Brusic V."/>
            <person name="Quackenbush J."/>
            <person name="Wahlestedt C."/>
            <person name="Mattick J.S."/>
            <person name="Hume D.A."/>
            <person name="Kai C."/>
            <person name="Sasaki D."/>
            <person name="Tomaru Y."/>
            <person name="Fukuda S."/>
            <person name="Kanamori-Katayama M."/>
            <person name="Suzuki M."/>
            <person name="Aoki J."/>
            <person name="Arakawa T."/>
            <person name="Iida J."/>
            <person name="Imamura K."/>
            <person name="Itoh M."/>
            <person name="Kato T."/>
            <person name="Kawaji H."/>
            <person name="Kawagashira N."/>
            <person name="Kawashima T."/>
            <person name="Kojima M."/>
            <person name="Kondo S."/>
            <person name="Konno H."/>
            <person name="Nakano K."/>
            <person name="Ninomiya N."/>
            <person name="Nishio T."/>
            <person name="Okada M."/>
            <person name="Plessy C."/>
            <person name="Shibata K."/>
            <person name="Shiraki T."/>
            <person name="Suzuki S."/>
            <person name="Tagami M."/>
            <person name="Waki K."/>
            <person name="Watahiki A."/>
            <person name="Okamura-Oho Y."/>
            <person name="Suzuki H."/>
            <person name="Kawai J."/>
            <person name="Hayashizaki Y."/>
        </authorList>
    </citation>
    <scope>NUCLEOTIDE SEQUENCE [LARGE SCALE MRNA] (ISOFORM 4)</scope>
    <source>
        <strain>C57BL/6J</strain>
        <tissue>Head</tissue>
    </source>
</reference>
<reference key="3">
    <citation type="journal article" date="2004" name="Genome Res.">
        <title>The status, quality, and expansion of the NIH full-length cDNA project: the Mammalian Gene Collection (MGC).</title>
        <authorList>
            <consortium name="The MGC Project Team"/>
        </authorList>
    </citation>
    <scope>NUCLEOTIDE SEQUENCE [LARGE SCALE MRNA] (ISOFORM 2)</scope>
    <source>
        <strain>C57BL/6J</strain>
        <tissue>Brain</tissue>
    </source>
</reference>
<reference key="4">
    <citation type="journal article" date="1994" name="Hum. Mol. Genet.">
        <title>A mouse Y chromosome gene encoded by a region essential for spermatogenesis and expression of male-specific minor histocompatibility antigens.</title>
        <authorList>
            <person name="Agulnik A.I."/>
            <person name="Mitchell M.J."/>
            <person name="Lerner J.L."/>
            <person name="Woods D.R."/>
            <person name="Bishop C.E."/>
        </authorList>
    </citation>
    <scope>NUCLEOTIDE SEQUENCE [MRNA] OF 23-1548 (ISOFORM 3)</scope>
    <source>
        <strain>BALB/cJ</strain>
        <tissue>Testis</tissue>
    </source>
</reference>
<reference key="5">
    <citation type="journal article" date="1995" name="Nature">
        <title>Identification of a mouse male-specific transplantation antigen, H-Y.</title>
        <authorList>
            <person name="Scott D.M."/>
            <person name="Ehrmann I.E."/>
            <person name="Ellis P.S."/>
            <person name="Bishop C.E."/>
            <person name="Agulnik A.I."/>
            <person name="Simpson E."/>
            <person name="Mitchell M.J."/>
        </authorList>
    </citation>
    <scope>FUNCTION</scope>
</reference>
<reference key="6">
    <citation type="journal article" date="1986" name="Nature">
        <title>Spermatogenic failure in male mice lacking H-Y antigen.</title>
        <authorList>
            <person name="Burgoyne P.S."/>
            <person name="Levy E.R."/>
            <person name="McLaren A."/>
        </authorList>
    </citation>
    <scope>FUNCTION</scope>
</reference>
<organism>
    <name type="scientific">Mus musculus</name>
    <name type="common">Mouse</name>
    <dbReference type="NCBI Taxonomy" id="10090"/>
    <lineage>
        <taxon>Eukaryota</taxon>
        <taxon>Metazoa</taxon>
        <taxon>Chordata</taxon>
        <taxon>Craniata</taxon>
        <taxon>Vertebrata</taxon>
        <taxon>Euteleostomi</taxon>
        <taxon>Mammalia</taxon>
        <taxon>Eutheria</taxon>
        <taxon>Euarchontoglires</taxon>
        <taxon>Glires</taxon>
        <taxon>Rodentia</taxon>
        <taxon>Myomorpha</taxon>
        <taxon>Muroidea</taxon>
        <taxon>Muridae</taxon>
        <taxon>Murinae</taxon>
        <taxon>Mus</taxon>
        <taxon>Mus</taxon>
    </lineage>
</organism>
<protein>
    <recommendedName>
        <fullName>Lysine-specific demethylase 5D</fullName>
        <ecNumber evidence="4">1.14.11.67</ecNumber>
    </recommendedName>
    <alternativeName>
        <fullName>Histocompatibility Y antigen</fullName>
        <shortName>H-Y</shortName>
    </alternativeName>
    <alternativeName>
        <fullName>Histone demethylase JARID1D</fullName>
    </alternativeName>
    <alternativeName>
        <fullName>Jumonji/ARID domain-containing protein 1D</fullName>
    </alternativeName>
    <alternativeName>
        <fullName>Protein SmcY</fullName>
    </alternativeName>
    <alternativeName>
        <fullName evidence="15">[histone H3]-trimethyl-L-lysine(4) demethylase 5D</fullName>
    </alternativeName>
</protein>
<proteinExistence type="evidence at transcript level"/>
<name>KDM5D_MOUSE</name>
<feature type="chain" id="PRO_0000200589" description="Lysine-specific demethylase 5D">
    <location>
        <begin position="1"/>
        <end position="1548"/>
    </location>
</feature>
<feature type="domain" description="JmjN" evidence="7">
    <location>
        <begin position="14"/>
        <end position="55"/>
    </location>
</feature>
<feature type="domain" description="ARID" evidence="6">
    <location>
        <begin position="79"/>
        <end position="169"/>
    </location>
</feature>
<feature type="domain" description="JmjC" evidence="8">
    <location>
        <begin position="467"/>
        <end position="633"/>
    </location>
</feature>
<feature type="zinc finger region" description="PHD-type 1" evidence="5">
    <location>
        <begin position="325"/>
        <end position="371"/>
    </location>
</feature>
<feature type="zinc finger region" description="C5HC2" evidence="1">
    <location>
        <begin position="706"/>
        <end position="758"/>
    </location>
</feature>
<feature type="zinc finger region" description="PHD-type 2" evidence="5">
    <location>
        <begin position="1182"/>
        <end position="1243"/>
    </location>
</feature>
<feature type="region of interest" description="Disordered" evidence="9">
    <location>
        <begin position="208"/>
        <end position="229"/>
    </location>
</feature>
<feature type="region of interest" description="Disordered" evidence="9">
    <location>
        <begin position="1438"/>
        <end position="1468"/>
    </location>
</feature>
<feature type="binding site" evidence="1">
    <location>
        <position position="439"/>
    </location>
    <ligand>
        <name>2-oxoglutarate</name>
        <dbReference type="ChEBI" id="CHEBI:16810"/>
    </ligand>
</feature>
<feature type="binding site" evidence="8">
    <location>
        <position position="513"/>
    </location>
    <ligand>
        <name>Fe cation</name>
        <dbReference type="ChEBI" id="CHEBI:24875"/>
        <note>catalytic</note>
    </ligand>
</feature>
<feature type="binding site" evidence="1">
    <location>
        <position position="515"/>
    </location>
    <ligand>
        <name>Fe cation</name>
        <dbReference type="ChEBI" id="CHEBI:24875"/>
        <note>catalytic</note>
    </ligand>
</feature>
<feature type="binding site" evidence="1">
    <location>
        <position position="521"/>
    </location>
    <ligand>
        <name>2-oxoglutarate</name>
        <dbReference type="ChEBI" id="CHEBI:16810"/>
    </ligand>
</feature>
<feature type="binding site" evidence="1">
    <location>
        <position position="523"/>
    </location>
    <ligand>
        <name>2-oxoglutarate</name>
        <dbReference type="ChEBI" id="CHEBI:16810"/>
    </ligand>
</feature>
<feature type="binding site" evidence="1">
    <location>
        <position position="531"/>
    </location>
    <ligand>
        <name>2-oxoglutarate</name>
        <dbReference type="ChEBI" id="CHEBI:16810"/>
    </ligand>
</feature>
<feature type="binding site" evidence="8">
    <location>
        <position position="601"/>
    </location>
    <ligand>
        <name>Fe cation</name>
        <dbReference type="ChEBI" id="CHEBI:24875"/>
        <note>catalytic</note>
    </ligand>
</feature>
<feature type="modified residue" description="Phosphoserine" evidence="2">
    <location>
        <position position="300"/>
    </location>
</feature>
<feature type="modified residue" description="Phosphoserine" evidence="2">
    <location>
        <position position="316"/>
    </location>
</feature>
<feature type="modified residue" description="Phosphoserine" evidence="3">
    <location>
        <position position="889"/>
    </location>
</feature>
<feature type="modified residue" description="Phosphoserine" evidence="2">
    <location>
        <position position="893"/>
    </location>
</feature>
<feature type="modified residue" description="Phosphoserine" evidence="2">
    <location>
        <position position="1355"/>
    </location>
</feature>
<feature type="cross-link" description="Glycyl lysine isopeptide (Lys-Gly) (interchain with G-Cter in SUMO2)" evidence="2">
    <location>
        <position position="205"/>
    </location>
</feature>
<feature type="cross-link" description="Glycyl lysine isopeptide (Lys-Gly) (interchain with G-Cter in SUMO2)" evidence="2">
    <location>
        <position position="229"/>
    </location>
</feature>
<feature type="cross-link" description="Glycyl lysine isopeptide (Lys-Gly) (interchain with G-Cter in SUMO2)" evidence="2">
    <location>
        <position position="244"/>
    </location>
</feature>
<feature type="cross-link" description="Glycyl lysine isopeptide (Lys-Gly) (interchain with G-Cter in SUMO2)" evidence="2">
    <location>
        <position position="279"/>
    </location>
</feature>
<feature type="cross-link" description="Glycyl lysine isopeptide (Lys-Gly) (interchain with G-Cter in SUMO2)" evidence="2">
    <location>
        <position position="1123"/>
    </location>
</feature>
<feature type="splice variant" id="VSP_026412" description="In isoform 2." evidence="12">
    <location>
        <begin position="1"/>
        <end position="398"/>
    </location>
</feature>
<feature type="splice variant" id="VSP_026413" description="In isoform 3." evidence="14">
    <original>VRTN</original>
    <variation>SIWK</variation>
    <location>
        <begin position="583"/>
        <end position="586"/>
    </location>
</feature>
<feature type="splice variant" id="VSP_026414" description="In isoform 3." evidence="14">
    <location>
        <begin position="587"/>
        <end position="1548"/>
    </location>
</feature>
<feature type="splice variant" id="VSP_026415" description="In isoform 4." evidence="13">
    <original>GITEA</original>
    <variation>LSLQA</variation>
    <location>
        <begin position="687"/>
        <end position="691"/>
    </location>
</feature>
<feature type="splice variant" id="VSP_026416" description="In isoform 4." evidence="13">
    <location>
        <begin position="692"/>
        <end position="1548"/>
    </location>
</feature>
<feature type="sequence conflict" description="In Ref. 4; CAA82760." evidence="15" ref="4">
    <original>IIY</original>
    <variation>SFT</variation>
    <location>
        <begin position="160"/>
        <end position="162"/>
    </location>
</feature>
<feature type="sequence conflict" description="In Ref. 4; CAA82760." evidence="15" ref="4">
    <original>F</original>
    <variation>S</variation>
    <location>
        <position position="167"/>
    </location>
</feature>
<feature type="sequence conflict" description="In Ref. 4; CAA82760." evidence="15" ref="4">
    <original>R</original>
    <variation>K</variation>
    <location>
        <position position="215"/>
    </location>
</feature>